<feature type="chain" id="PRO_0000218532" description="Alpha-adducin">
    <location>
        <begin position="1"/>
        <end position="735"/>
    </location>
</feature>
<feature type="region of interest" description="Disordered" evidence="5">
    <location>
        <begin position="1"/>
        <end position="21"/>
    </location>
</feature>
<feature type="region of interest" description="Disordered" evidence="5">
    <location>
        <begin position="418"/>
        <end position="486"/>
    </location>
</feature>
<feature type="region of interest" description="Disordered" evidence="5">
    <location>
        <begin position="576"/>
        <end position="735"/>
    </location>
</feature>
<feature type="region of interest" description="Interaction with calmodulin" evidence="4">
    <location>
        <begin position="715"/>
        <end position="732"/>
    </location>
</feature>
<feature type="compositionally biased region" description="Low complexity" evidence="5">
    <location>
        <begin position="1"/>
        <end position="11"/>
    </location>
</feature>
<feature type="compositionally biased region" description="Basic and acidic residues" evidence="5">
    <location>
        <begin position="576"/>
        <end position="601"/>
    </location>
</feature>
<feature type="compositionally biased region" description="Low complexity" evidence="5">
    <location>
        <begin position="678"/>
        <end position="712"/>
    </location>
</feature>
<feature type="compositionally biased region" description="Basic residues" evidence="5">
    <location>
        <begin position="713"/>
        <end position="735"/>
    </location>
</feature>
<feature type="modified residue" description="N-acetylmethionine" evidence="2">
    <location>
        <position position="1"/>
    </location>
</feature>
<feature type="modified residue" description="Phosphoserine" evidence="7">
    <location>
        <position position="12"/>
    </location>
</feature>
<feature type="modified residue" description="Phosphoserine; by PKA" evidence="2">
    <location>
        <position position="59"/>
    </location>
</feature>
<feature type="modified residue" description="Phosphoserine" evidence="2">
    <location>
        <position position="64"/>
    </location>
</feature>
<feature type="modified residue" description="Phosphothreonine" evidence="2">
    <location>
        <position position="331"/>
    </location>
</feature>
<feature type="modified residue" description="Phosphoserine" evidence="2">
    <location>
        <position position="334"/>
    </location>
</feature>
<feature type="modified residue" description="Phosphoserine" evidence="2">
    <location>
        <position position="353"/>
    </location>
</feature>
<feature type="modified residue" description="Phosphoserine" evidence="7">
    <location>
        <position position="355"/>
    </location>
</feature>
<feature type="modified residue" description="Phosphothreonine" evidence="7">
    <location>
        <position position="358"/>
    </location>
</feature>
<feature type="modified residue" description="Phosphoserine" evidence="3">
    <location>
        <position position="364"/>
    </location>
</feature>
<feature type="modified residue" description="Phosphoserine" evidence="7">
    <location>
        <position position="366"/>
    </location>
</feature>
<feature type="modified residue" description="Phosphoserine; by PKA" evidence="2">
    <location>
        <position position="408"/>
    </location>
</feature>
<feature type="modified residue" description="Phosphoserine" evidence="3">
    <location>
        <position position="427"/>
    </location>
</feature>
<feature type="modified residue" description="Phosphothreonine" evidence="3">
    <location>
        <position position="429"/>
    </location>
</feature>
<feature type="modified residue" description="Phosphoserine" evidence="2">
    <location>
        <position position="431"/>
    </location>
</feature>
<feature type="modified residue" description="Phosphoserine; by PKA" evidence="2">
    <location>
        <position position="436"/>
    </location>
</feature>
<feature type="modified residue" description="Phosphothreonine; by ROCK2" evidence="2">
    <location>
        <position position="445"/>
    </location>
</feature>
<feature type="modified residue" description="Phosphoserine" evidence="3">
    <location>
        <position position="464"/>
    </location>
</feature>
<feature type="modified residue" description="Phosphoserine" evidence="7">
    <location>
        <position position="465"/>
    </location>
</feature>
<feature type="modified residue" description="Phosphothreonine; by ROCK2" evidence="2">
    <location>
        <position position="480"/>
    </location>
</feature>
<feature type="modified residue" description="Phosphoserine; by PKA" evidence="2">
    <location>
        <position position="481"/>
    </location>
</feature>
<feature type="modified residue" description="Phosphoserine" evidence="7">
    <location>
        <position position="586"/>
    </location>
</feature>
<feature type="modified residue" description="Phosphoserine" evidence="7">
    <location>
        <position position="600"/>
    </location>
</feature>
<feature type="modified residue" description="Phosphoserine" evidence="3">
    <location>
        <position position="605"/>
    </location>
</feature>
<feature type="modified residue" description="Phosphothreonine" evidence="7">
    <location>
        <position position="610"/>
    </location>
</feature>
<feature type="modified residue" description="Phosphoserine" evidence="3">
    <location>
        <position position="613"/>
    </location>
</feature>
<feature type="modified residue" description="Phosphothreonine" evidence="7">
    <location>
        <position position="614"/>
    </location>
</feature>
<feature type="modified residue" description="Phosphoserine" evidence="2">
    <location>
        <position position="705"/>
    </location>
</feature>
<feature type="modified residue" description="Phosphoserine" evidence="2">
    <location>
        <position position="708"/>
    </location>
</feature>
<feature type="modified residue" description="Phosphoserine" evidence="2">
    <location>
        <position position="712"/>
    </location>
</feature>
<feature type="modified residue" description="Phosphoserine; by PKC" evidence="2">
    <location>
        <position position="714"/>
    </location>
</feature>
<feature type="modified residue" description="Phosphoserine; by PKA and PKC" evidence="2">
    <location>
        <position position="724"/>
    </location>
</feature>
<feature type="splice variant" id="VSP_000179" description="In isoform 2." evidence="6">
    <original>GLPQEPTSRDGS</original>
    <variation>GDGCAKEYLLP</variation>
    <location>
        <begin position="621"/>
        <end position="632"/>
    </location>
</feature>
<feature type="splice variant" id="VSP_000180" description="In isoform 2." evidence="6">
    <location>
        <begin position="633"/>
        <end position="735"/>
    </location>
</feature>
<feature type="sequence variant" description="In strain: Milan hypersensitive.">
    <original>Y</original>
    <variation>F</variation>
    <location>
        <position position="316"/>
    </location>
</feature>
<feature type="sequence conflict" description="In Ref. 1; CAA88907." evidence="6" ref="1">
    <original>DATT</original>
    <variation>GCHA</variation>
    <location>
        <begin position="633"/>
        <end position="636"/>
    </location>
</feature>
<feature type="sequence conflict" description="In Ref. 3; CAA58690." evidence="6" ref="3">
    <original>A</original>
    <variation>G</variation>
    <location>
        <position position="654"/>
    </location>
</feature>
<organism>
    <name type="scientific">Rattus norvegicus</name>
    <name type="common">Rat</name>
    <dbReference type="NCBI Taxonomy" id="10116"/>
    <lineage>
        <taxon>Eukaryota</taxon>
        <taxon>Metazoa</taxon>
        <taxon>Chordata</taxon>
        <taxon>Craniata</taxon>
        <taxon>Vertebrata</taxon>
        <taxon>Euteleostomi</taxon>
        <taxon>Mammalia</taxon>
        <taxon>Eutheria</taxon>
        <taxon>Euarchontoglires</taxon>
        <taxon>Glires</taxon>
        <taxon>Rodentia</taxon>
        <taxon>Myomorpha</taxon>
        <taxon>Muroidea</taxon>
        <taxon>Muridae</taxon>
        <taxon>Murinae</taxon>
        <taxon>Rattus</taxon>
    </lineage>
</organism>
<proteinExistence type="evidence at protein level"/>
<name>ADDA_RAT</name>
<accession>Q63028</accession>
<accession>Q3B7D4</accession>
<accession>Q64722</accession>
<gene>
    <name type="primary">Add1</name>
</gene>
<keyword id="KW-0007">Acetylation</keyword>
<keyword id="KW-0009">Actin-binding</keyword>
<keyword id="KW-0025">Alternative splicing</keyword>
<keyword id="KW-0112">Calmodulin-binding</keyword>
<keyword id="KW-1003">Cell membrane</keyword>
<keyword id="KW-0963">Cytoplasm</keyword>
<keyword id="KW-0206">Cytoskeleton</keyword>
<keyword id="KW-0472">Membrane</keyword>
<keyword id="KW-0597">Phosphoprotein</keyword>
<keyword id="KW-1185">Reference proteome</keyword>
<comment type="function">
    <text>Membrane-cytoskeleton-associated protein that promotes the assembly of the spectrin-actin network. Binds to calmodulin.</text>
</comment>
<comment type="subunit">
    <text>Heterodimer of an alpha and a beta subunit or an alpha and a gamma subunit.</text>
</comment>
<comment type="subcellular location">
    <subcellularLocation>
        <location evidence="1">Cytoplasm</location>
        <location evidence="1">Cytoskeleton</location>
    </subcellularLocation>
    <subcellularLocation>
        <location evidence="1">Cell membrane</location>
        <topology evidence="1">Peripheral membrane protein</topology>
        <orientation evidence="1">Cytoplasmic side</orientation>
    </subcellularLocation>
</comment>
<comment type="alternative products">
    <event type="alternative splicing"/>
    <isoform>
        <id>Q63028-1</id>
        <name>1</name>
        <sequence type="displayed"/>
    </isoform>
    <isoform>
        <id>Q63028-2</id>
        <name>2</name>
        <sequence type="described" ref="VSP_000179 VSP_000180"/>
    </isoform>
    <text>Additional isoforms seem to exist.</text>
</comment>
<comment type="domain">
    <text>Each subunit is comprised of three regions: a NH2-terminal protease-resistant globular head region, a short connecting subdomain, and a protease-sensitive tail region.</text>
</comment>
<comment type="similarity">
    <text evidence="6">Belongs to the aldolase class II family. Adducin subfamily.</text>
</comment>
<reference key="1">
    <citation type="journal article" date="1995" name="Gene">
        <title>Characterisation and chromosomal localisation of the rat alpha- and beta-adducin-encoding genes.</title>
        <authorList>
            <person name="Tripodi G."/>
            <person name="Casari G."/>
            <person name="Tisminetzky S."/>
            <person name="Bianchi G."/>
            <person name="Devescovi G."/>
            <person name="Muro A."/>
            <person name="Tuteja R."/>
            <person name="Baralle F.E."/>
        </authorList>
    </citation>
    <scope>NUCLEOTIDE SEQUENCE [MRNA]</scope>
    <source>
        <strain>Milan</strain>
        <tissue>Bone marrow</tissue>
    </source>
</reference>
<reference key="2">
    <citation type="journal article" date="2004" name="Genome Res.">
        <title>The status, quality, and expansion of the NIH full-length cDNA project: the Mammalian Gene Collection (MGC).</title>
        <authorList>
            <consortium name="The MGC Project Team"/>
        </authorList>
    </citation>
    <scope>NUCLEOTIDE SEQUENCE [LARGE SCALE MRNA]</scope>
    <source>
        <tissue>Prostate</tissue>
    </source>
</reference>
<reference key="3">
    <citation type="journal article" date="1995" name="Brain Res.">
        <title>Spatial and sub-cellular localization of the membrane cytoskeleton-associated protein alpha-adducin in the rat brain.</title>
        <authorList>
            <person name="Seidel B."/>
            <person name="Zuschratter W."/>
            <person name="Wex H."/>
            <person name="Garner C.C."/>
            <person name="Gundelfinger E.D."/>
        </authorList>
    </citation>
    <scope>NUCLEOTIDE SEQUENCE [MRNA] OF 426-735</scope>
    <source>
        <strain>Sprague-Dawley</strain>
        <tissue>Brain</tissue>
    </source>
</reference>
<reference key="4">
    <citation type="journal article" date="2012" name="Nat. Commun.">
        <title>Quantitative maps of protein phosphorylation sites across 14 different rat organs and tissues.</title>
        <authorList>
            <person name="Lundby A."/>
            <person name="Secher A."/>
            <person name="Lage K."/>
            <person name="Nordsborg N.B."/>
            <person name="Dmytriyev A."/>
            <person name="Lundby C."/>
            <person name="Olsen J.V."/>
        </authorList>
    </citation>
    <scope>PHOSPHORYLATION [LARGE SCALE ANALYSIS] AT SER-12; SER-355; THR-358; SER-366; SER-465; SER-586; SER-600; THR-610 AND THR-614</scope>
    <scope>IDENTIFICATION BY MASS SPECTROMETRY [LARGE SCALE ANALYSIS]</scope>
</reference>
<protein>
    <recommendedName>
        <fullName>Alpha-adducin</fullName>
    </recommendedName>
    <alternativeName>
        <fullName>Erythrocyte adducin subunit alpha</fullName>
    </alternativeName>
</protein>
<dbReference type="EMBL" id="Z49081">
    <property type="protein sequence ID" value="CAA88906.1"/>
    <property type="molecule type" value="mRNA"/>
</dbReference>
<dbReference type="EMBL" id="Z49082">
    <property type="protein sequence ID" value="CAA88907.1"/>
    <property type="molecule type" value="mRNA"/>
</dbReference>
<dbReference type="EMBL" id="BC107657">
    <property type="protein sequence ID" value="AAI07658.1"/>
    <property type="molecule type" value="mRNA"/>
</dbReference>
<dbReference type="EMBL" id="X83715">
    <property type="protein sequence ID" value="CAA58690.1"/>
    <property type="molecule type" value="mRNA"/>
</dbReference>
<dbReference type="PIR" id="S54147">
    <property type="entry name" value="S54147"/>
</dbReference>
<dbReference type="RefSeq" id="NP_058686.2">
    <molecule id="Q63028-1"/>
    <property type="nucleotide sequence ID" value="NM_016990.2"/>
</dbReference>
<dbReference type="SMR" id="Q63028"/>
<dbReference type="BioGRID" id="246360">
    <property type="interactions" value="1"/>
</dbReference>
<dbReference type="FunCoup" id="Q63028">
    <property type="interactions" value="3626"/>
</dbReference>
<dbReference type="IntAct" id="Q63028">
    <property type="interactions" value="1"/>
</dbReference>
<dbReference type="MINT" id="Q63028"/>
<dbReference type="STRING" id="10116.ENSRNOP00000018072"/>
<dbReference type="GlyGen" id="Q63028">
    <property type="glycosylation" value="8 sites, 1 O-linked glycan (6 sites)"/>
</dbReference>
<dbReference type="iPTMnet" id="Q63028"/>
<dbReference type="PhosphoSitePlus" id="Q63028"/>
<dbReference type="jPOST" id="Q63028"/>
<dbReference type="PaxDb" id="10116-ENSRNOP00000018072"/>
<dbReference type="GeneID" id="24170"/>
<dbReference type="KEGG" id="rno:24170"/>
<dbReference type="AGR" id="RGD:2041"/>
<dbReference type="CTD" id="118"/>
<dbReference type="RGD" id="2041">
    <property type="gene designation" value="Add1"/>
</dbReference>
<dbReference type="eggNOG" id="KOG3699">
    <property type="taxonomic scope" value="Eukaryota"/>
</dbReference>
<dbReference type="InParanoid" id="Q63028"/>
<dbReference type="PhylomeDB" id="Q63028"/>
<dbReference type="TreeFam" id="TF313003"/>
<dbReference type="Reactome" id="R-RNO-264870">
    <property type="pathway name" value="Caspase-mediated cleavage of cytoskeletal proteins"/>
</dbReference>
<dbReference type="Reactome" id="R-RNO-5223345">
    <property type="pathway name" value="Miscellaneous transport and binding events"/>
</dbReference>
<dbReference type="PRO" id="PR:Q63028"/>
<dbReference type="Proteomes" id="UP000002494">
    <property type="component" value="Unplaced"/>
</dbReference>
<dbReference type="GO" id="GO:0005912">
    <property type="term" value="C:adherens junction"/>
    <property type="evidence" value="ECO:0000266"/>
    <property type="project" value="RGD"/>
</dbReference>
<dbReference type="GO" id="GO:0005737">
    <property type="term" value="C:cytoplasm"/>
    <property type="evidence" value="ECO:0000266"/>
    <property type="project" value="RGD"/>
</dbReference>
<dbReference type="GO" id="GO:0005856">
    <property type="term" value="C:cytoskeleton"/>
    <property type="evidence" value="ECO:0000266"/>
    <property type="project" value="RGD"/>
</dbReference>
<dbReference type="GO" id="GO:0030425">
    <property type="term" value="C:dendrite"/>
    <property type="evidence" value="ECO:0000314"/>
    <property type="project" value="RGD"/>
</dbReference>
<dbReference type="GO" id="GO:0043197">
    <property type="term" value="C:dendritic spine"/>
    <property type="evidence" value="ECO:0000314"/>
    <property type="project" value="RGD"/>
</dbReference>
<dbReference type="GO" id="GO:0008290">
    <property type="term" value="C:F-actin capping protein complex"/>
    <property type="evidence" value="ECO:0000266"/>
    <property type="project" value="RGD"/>
</dbReference>
<dbReference type="GO" id="GO:0016020">
    <property type="term" value="C:membrane"/>
    <property type="evidence" value="ECO:0000266"/>
    <property type="project" value="RGD"/>
</dbReference>
<dbReference type="GO" id="GO:0005634">
    <property type="term" value="C:nucleus"/>
    <property type="evidence" value="ECO:0000266"/>
    <property type="project" value="RGD"/>
</dbReference>
<dbReference type="GO" id="GO:0048471">
    <property type="term" value="C:perinuclear region of cytoplasm"/>
    <property type="evidence" value="ECO:0000314"/>
    <property type="project" value="RGD"/>
</dbReference>
<dbReference type="GO" id="GO:0005886">
    <property type="term" value="C:plasma membrane"/>
    <property type="evidence" value="ECO:0000266"/>
    <property type="project" value="RGD"/>
</dbReference>
<dbReference type="GO" id="GO:0014069">
    <property type="term" value="C:postsynaptic density"/>
    <property type="evidence" value="ECO:0000318"/>
    <property type="project" value="GO_Central"/>
</dbReference>
<dbReference type="GO" id="GO:0045202">
    <property type="term" value="C:synapse"/>
    <property type="evidence" value="ECO:0000266"/>
    <property type="project" value="RGD"/>
</dbReference>
<dbReference type="GO" id="GO:0051015">
    <property type="term" value="F:actin filament binding"/>
    <property type="evidence" value="ECO:0000266"/>
    <property type="project" value="RGD"/>
</dbReference>
<dbReference type="GO" id="GO:0005516">
    <property type="term" value="F:calmodulin binding"/>
    <property type="evidence" value="ECO:0007669"/>
    <property type="project" value="UniProtKB-KW"/>
</dbReference>
<dbReference type="GO" id="GO:0046983">
    <property type="term" value="F:protein dimerization activity"/>
    <property type="evidence" value="ECO:0000266"/>
    <property type="project" value="RGD"/>
</dbReference>
<dbReference type="GO" id="GO:0046982">
    <property type="term" value="F:protein heterodimerization activity"/>
    <property type="evidence" value="ECO:0000266"/>
    <property type="project" value="RGD"/>
</dbReference>
<dbReference type="GO" id="GO:0042803">
    <property type="term" value="F:protein homodimerization activity"/>
    <property type="evidence" value="ECO:0000266"/>
    <property type="project" value="RGD"/>
</dbReference>
<dbReference type="GO" id="GO:0061629">
    <property type="term" value="F:RNA polymerase II-specific DNA-binding transcription factor binding"/>
    <property type="evidence" value="ECO:0000266"/>
    <property type="project" value="RGD"/>
</dbReference>
<dbReference type="GO" id="GO:0030507">
    <property type="term" value="F:spectrin binding"/>
    <property type="evidence" value="ECO:0000266"/>
    <property type="project" value="RGD"/>
</dbReference>
<dbReference type="GO" id="GO:0005200">
    <property type="term" value="F:structural constituent of cytoskeleton"/>
    <property type="evidence" value="ECO:0000266"/>
    <property type="project" value="RGD"/>
</dbReference>
<dbReference type="GO" id="GO:0042608">
    <property type="term" value="F:T cell receptor binding"/>
    <property type="evidence" value="ECO:0000314"/>
    <property type="project" value="RGD"/>
</dbReference>
<dbReference type="GO" id="GO:0051017">
    <property type="term" value="P:actin filament bundle assembly"/>
    <property type="evidence" value="ECO:0000266"/>
    <property type="project" value="RGD"/>
</dbReference>
<dbReference type="GO" id="GO:0051016">
    <property type="term" value="P:barbed-end actin filament capping"/>
    <property type="evidence" value="ECO:0000266"/>
    <property type="project" value="RGD"/>
</dbReference>
<dbReference type="GO" id="GO:0000902">
    <property type="term" value="P:cell morphogenesis"/>
    <property type="evidence" value="ECO:0000266"/>
    <property type="project" value="RGD"/>
</dbReference>
<dbReference type="GO" id="GO:0006884">
    <property type="term" value="P:cell volume homeostasis"/>
    <property type="evidence" value="ECO:0000266"/>
    <property type="project" value="RGD"/>
</dbReference>
<dbReference type="GO" id="GO:0071277">
    <property type="term" value="P:cellular response to calcium ion"/>
    <property type="evidence" value="ECO:0000266"/>
    <property type="project" value="RGD"/>
</dbReference>
<dbReference type="GO" id="GO:0071300">
    <property type="term" value="P:cellular response to retinoic acid"/>
    <property type="evidence" value="ECO:0000314"/>
    <property type="project" value="RGD"/>
</dbReference>
<dbReference type="GO" id="GO:0007010">
    <property type="term" value="P:cytoskeleton organization"/>
    <property type="evidence" value="ECO:0000304"/>
    <property type="project" value="RGD"/>
</dbReference>
<dbReference type="GO" id="GO:0030218">
    <property type="term" value="P:erythrocyte differentiation"/>
    <property type="evidence" value="ECO:0000266"/>
    <property type="project" value="RGD"/>
</dbReference>
<dbReference type="GO" id="GO:0020027">
    <property type="term" value="P:hemoglobin metabolic process"/>
    <property type="evidence" value="ECO:0000266"/>
    <property type="project" value="RGD"/>
</dbReference>
<dbReference type="GO" id="GO:0048873">
    <property type="term" value="P:homeostasis of number of cells within a tissue"/>
    <property type="evidence" value="ECO:0000266"/>
    <property type="project" value="RGD"/>
</dbReference>
<dbReference type="GO" id="GO:0001701">
    <property type="term" value="P:in utero embryonic development"/>
    <property type="evidence" value="ECO:0000266"/>
    <property type="project" value="RGD"/>
</dbReference>
<dbReference type="GO" id="GO:0006811">
    <property type="term" value="P:monoatomic ion transport"/>
    <property type="evidence" value="ECO:0000303"/>
    <property type="project" value="RGD"/>
</dbReference>
<dbReference type="GO" id="GO:0035264">
    <property type="term" value="P:multicellular organism growth"/>
    <property type="evidence" value="ECO:0000266"/>
    <property type="project" value="RGD"/>
</dbReference>
<dbReference type="GO" id="GO:0030837">
    <property type="term" value="P:negative regulation of actin filament polymerization"/>
    <property type="evidence" value="ECO:0000315"/>
    <property type="project" value="RGD"/>
</dbReference>
<dbReference type="GO" id="GO:1903393">
    <property type="term" value="P:positive regulation of adherens junction organization"/>
    <property type="evidence" value="ECO:0000266"/>
    <property type="project" value="RGD"/>
</dbReference>
<dbReference type="GO" id="GO:0045766">
    <property type="term" value="P:positive regulation of angiogenesis"/>
    <property type="evidence" value="ECO:0000314"/>
    <property type="project" value="RGD"/>
</dbReference>
<dbReference type="GO" id="GO:0045807">
    <property type="term" value="P:positive regulation of endocytosis"/>
    <property type="evidence" value="ECO:0000315"/>
    <property type="project" value="RGD"/>
</dbReference>
<dbReference type="GO" id="GO:1903142">
    <property type="term" value="P:positive regulation of establishment of endothelial barrier"/>
    <property type="evidence" value="ECO:0000266"/>
    <property type="project" value="RGD"/>
</dbReference>
<dbReference type="CDD" id="cd00398">
    <property type="entry name" value="Aldolase_II"/>
    <property type="match status" value="1"/>
</dbReference>
<dbReference type="FunFam" id="3.40.225.10:FF:000002">
    <property type="entry name" value="alpha-adducin isoform X2"/>
    <property type="match status" value="1"/>
</dbReference>
<dbReference type="Gene3D" id="3.40.225.10">
    <property type="entry name" value="Class II aldolase/adducin N-terminal domain"/>
    <property type="match status" value="1"/>
</dbReference>
<dbReference type="InterPro" id="IPR051017">
    <property type="entry name" value="Aldolase-II_Adducin_sf"/>
</dbReference>
<dbReference type="InterPro" id="IPR001303">
    <property type="entry name" value="Aldolase_II/adducin_N"/>
</dbReference>
<dbReference type="InterPro" id="IPR036409">
    <property type="entry name" value="Aldolase_II/adducin_N_sf"/>
</dbReference>
<dbReference type="NCBIfam" id="NF005451">
    <property type="entry name" value="PRK07044.1"/>
    <property type="match status" value="1"/>
</dbReference>
<dbReference type="PANTHER" id="PTHR10672">
    <property type="entry name" value="ADDUCIN"/>
    <property type="match status" value="1"/>
</dbReference>
<dbReference type="PANTHER" id="PTHR10672:SF4">
    <property type="entry name" value="ALPHA-ADDUCIN"/>
    <property type="match status" value="1"/>
</dbReference>
<dbReference type="Pfam" id="PF00596">
    <property type="entry name" value="Aldolase_II"/>
    <property type="match status" value="1"/>
</dbReference>
<dbReference type="SMART" id="SM01007">
    <property type="entry name" value="Aldolase_II"/>
    <property type="match status" value="1"/>
</dbReference>
<dbReference type="SUPFAM" id="SSF53639">
    <property type="entry name" value="AraD/HMP-PK domain-like"/>
    <property type="match status" value="1"/>
</dbReference>
<evidence type="ECO:0000250" key="1"/>
<evidence type="ECO:0000250" key="2">
    <source>
        <dbReference type="UniProtKB" id="P35611"/>
    </source>
</evidence>
<evidence type="ECO:0000250" key="3">
    <source>
        <dbReference type="UniProtKB" id="Q9QYC0"/>
    </source>
</evidence>
<evidence type="ECO:0000255" key="4"/>
<evidence type="ECO:0000256" key="5">
    <source>
        <dbReference type="SAM" id="MobiDB-lite"/>
    </source>
</evidence>
<evidence type="ECO:0000305" key="6"/>
<evidence type="ECO:0007744" key="7">
    <source>
    </source>
</evidence>
<sequence length="735" mass="80355">MNGDTRAAVVTSPPPTTAPHKERYFDRVDENNPEYLRERNMAPDLRQDFNMMEQKKRVSMILQSPAFCEELESMIQEQFKKGKNPTGLLALQQIADFMTASVPNVYPAAPQGGMAALNMSLGMVTPVNDLRGSDSIAYDKGEKLLRCKLAAFYRLADLFGWSQLIYNHITTRVNSEQEHFLIVPFGLLYSEVTASSLVKVNLQGDIVDRGSTNLGVNQAGFTLHSAIYAARPDAKCIVHIHTPAGAAVSAMKCGLLPISPEALSLGEVAYHDYHGILVDEEEKILIQKNLGPKSKVLILRNHGLVSVGESVEEAFYYIHNLVVACEIQVRTLASAGGPDNLVLLDPGKYKAKSRSPGTPAGEGSGSPPKWQIGEQEFEALMRMLDNLGYRTGYPYRYPALRERSKKYSDVEVPASVTGHSFASDGDSGTCSPLRHSFQKQQREKTRWLNSGRGDDASEEGQNGSSPKSKTKWTKEDGHRTSTSAVPNLFVPLNTNPKEVQEMRNKIREQNLQDIKTAGPQSQVLCGVMMDRSLVQGELVTASKAIIEKEYQPHVIVSTTGPNPFNTLTDRELEEYRREVERKQKGSEENLDETREQKEKSPPDQSAVPNTPPSTPVKLEGGLPQEPTSRDGSDATTSKPTPPDLSPDEPSEALAFPTVAEEAHASPDTTQPLAEADPEPASASAPGAEEVASPATEEGSPMDPGSDGSPGKSPSKKKKKFRTPSFLKKSKKKSDS</sequence>